<comment type="function">
    <text evidence="2">Plays a critical role in the biogenesis and activity of cytochrome c oxidase (COX) (complex IV).</text>
</comment>
<comment type="subcellular location">
    <subcellularLocation>
        <location evidence="2">Mitochondrion membrane</location>
        <topology evidence="2">Single-pass membrane protein</topology>
    </subcellularLocation>
</comment>
<comment type="disruption phenotype">
    <text evidence="2">Deficient flies show developmental delay, lethality, and a dramatic decrease in the levels/activity of COX.</text>
</comment>
<comment type="miscellaneous">
    <text evidence="4">Encoded on a bicistronic transcript that code for two proteins mtTFB1 and CG42630.</text>
</comment>
<comment type="similarity">
    <text evidence="3">Belongs to the COA3 family.</text>
</comment>
<accession>P0DKM0</accession>
<accession>N0BIP9</accession>
<reference key="1">
    <citation type="journal article" date="2000" name="Science">
        <title>The genome sequence of Drosophila melanogaster.</title>
        <authorList>
            <person name="Adams M.D."/>
            <person name="Celniker S.E."/>
            <person name="Holt R.A."/>
            <person name="Evans C.A."/>
            <person name="Gocayne J.D."/>
            <person name="Amanatides P.G."/>
            <person name="Scherer S.E."/>
            <person name="Li P.W."/>
            <person name="Hoskins R.A."/>
            <person name="Galle R.F."/>
            <person name="George R.A."/>
            <person name="Lewis S.E."/>
            <person name="Richards S."/>
            <person name="Ashburner M."/>
            <person name="Henderson S.N."/>
            <person name="Sutton G.G."/>
            <person name="Wortman J.R."/>
            <person name="Yandell M.D."/>
            <person name="Zhang Q."/>
            <person name="Chen L.X."/>
            <person name="Brandon R.C."/>
            <person name="Rogers Y.-H.C."/>
            <person name="Blazej R.G."/>
            <person name="Champe M."/>
            <person name="Pfeiffer B.D."/>
            <person name="Wan K.H."/>
            <person name="Doyle C."/>
            <person name="Baxter E.G."/>
            <person name="Helt G."/>
            <person name="Nelson C.R."/>
            <person name="Miklos G.L.G."/>
            <person name="Abril J.F."/>
            <person name="Agbayani A."/>
            <person name="An H.-J."/>
            <person name="Andrews-Pfannkoch C."/>
            <person name="Baldwin D."/>
            <person name="Ballew R.M."/>
            <person name="Basu A."/>
            <person name="Baxendale J."/>
            <person name="Bayraktaroglu L."/>
            <person name="Beasley E.M."/>
            <person name="Beeson K.Y."/>
            <person name="Benos P.V."/>
            <person name="Berman B.P."/>
            <person name="Bhandari D."/>
            <person name="Bolshakov S."/>
            <person name="Borkova D."/>
            <person name="Botchan M.R."/>
            <person name="Bouck J."/>
            <person name="Brokstein P."/>
            <person name="Brottier P."/>
            <person name="Burtis K.C."/>
            <person name="Busam D.A."/>
            <person name="Butler H."/>
            <person name="Cadieu E."/>
            <person name="Center A."/>
            <person name="Chandra I."/>
            <person name="Cherry J.M."/>
            <person name="Cawley S."/>
            <person name="Dahlke C."/>
            <person name="Davenport L.B."/>
            <person name="Davies P."/>
            <person name="de Pablos B."/>
            <person name="Delcher A."/>
            <person name="Deng Z."/>
            <person name="Mays A.D."/>
            <person name="Dew I."/>
            <person name="Dietz S.M."/>
            <person name="Dodson K."/>
            <person name="Doup L.E."/>
            <person name="Downes M."/>
            <person name="Dugan-Rocha S."/>
            <person name="Dunkov B.C."/>
            <person name="Dunn P."/>
            <person name="Durbin K.J."/>
            <person name="Evangelista C.C."/>
            <person name="Ferraz C."/>
            <person name="Ferriera S."/>
            <person name="Fleischmann W."/>
            <person name="Fosler C."/>
            <person name="Gabrielian A.E."/>
            <person name="Garg N.S."/>
            <person name="Gelbart W.M."/>
            <person name="Glasser K."/>
            <person name="Glodek A."/>
            <person name="Gong F."/>
            <person name="Gorrell J.H."/>
            <person name="Gu Z."/>
            <person name="Guan P."/>
            <person name="Harris M."/>
            <person name="Harris N.L."/>
            <person name="Harvey D.A."/>
            <person name="Heiman T.J."/>
            <person name="Hernandez J.R."/>
            <person name="Houck J."/>
            <person name="Hostin D."/>
            <person name="Houston K.A."/>
            <person name="Howland T.J."/>
            <person name="Wei M.-H."/>
            <person name="Ibegwam C."/>
            <person name="Jalali M."/>
            <person name="Kalush F."/>
            <person name="Karpen G.H."/>
            <person name="Ke Z."/>
            <person name="Kennison J.A."/>
            <person name="Ketchum K.A."/>
            <person name="Kimmel B.E."/>
            <person name="Kodira C.D."/>
            <person name="Kraft C.L."/>
            <person name="Kravitz S."/>
            <person name="Kulp D."/>
            <person name="Lai Z."/>
            <person name="Lasko P."/>
            <person name="Lei Y."/>
            <person name="Levitsky A.A."/>
            <person name="Li J.H."/>
            <person name="Li Z."/>
            <person name="Liang Y."/>
            <person name="Lin X."/>
            <person name="Liu X."/>
            <person name="Mattei B."/>
            <person name="McIntosh T.C."/>
            <person name="McLeod M.P."/>
            <person name="McPherson D."/>
            <person name="Merkulov G."/>
            <person name="Milshina N.V."/>
            <person name="Mobarry C."/>
            <person name="Morris J."/>
            <person name="Moshrefi A."/>
            <person name="Mount S.M."/>
            <person name="Moy M."/>
            <person name="Murphy B."/>
            <person name="Murphy L."/>
            <person name="Muzny D.M."/>
            <person name="Nelson D.L."/>
            <person name="Nelson D.R."/>
            <person name="Nelson K.A."/>
            <person name="Nixon K."/>
            <person name="Nusskern D.R."/>
            <person name="Pacleb J.M."/>
            <person name="Palazzolo M."/>
            <person name="Pittman G.S."/>
            <person name="Pan S."/>
            <person name="Pollard J."/>
            <person name="Puri V."/>
            <person name="Reese M.G."/>
            <person name="Reinert K."/>
            <person name="Remington K."/>
            <person name="Saunders R.D.C."/>
            <person name="Scheeler F."/>
            <person name="Shen H."/>
            <person name="Shue B.C."/>
            <person name="Siden-Kiamos I."/>
            <person name="Simpson M."/>
            <person name="Skupski M.P."/>
            <person name="Smith T.J."/>
            <person name="Spier E."/>
            <person name="Spradling A.C."/>
            <person name="Stapleton M."/>
            <person name="Strong R."/>
            <person name="Sun E."/>
            <person name="Svirskas R."/>
            <person name="Tector C."/>
            <person name="Turner R."/>
            <person name="Venter E."/>
            <person name="Wang A.H."/>
            <person name="Wang X."/>
            <person name="Wang Z.-Y."/>
            <person name="Wassarman D.A."/>
            <person name="Weinstock G.M."/>
            <person name="Weissenbach J."/>
            <person name="Williams S.M."/>
            <person name="Woodage T."/>
            <person name="Worley K.C."/>
            <person name="Wu D."/>
            <person name="Yang S."/>
            <person name="Yao Q.A."/>
            <person name="Ye J."/>
            <person name="Yeh R.-F."/>
            <person name="Zaveri J.S."/>
            <person name="Zhan M."/>
            <person name="Zhang G."/>
            <person name="Zhao Q."/>
            <person name="Zheng L."/>
            <person name="Zheng X.H."/>
            <person name="Zhong F.N."/>
            <person name="Zhong W."/>
            <person name="Zhou X."/>
            <person name="Zhu S.C."/>
            <person name="Zhu X."/>
            <person name="Smith H.O."/>
            <person name="Gibbs R.A."/>
            <person name="Myers E.W."/>
            <person name="Rubin G.M."/>
            <person name="Venter J.C."/>
        </authorList>
    </citation>
    <scope>NUCLEOTIDE SEQUENCE [LARGE SCALE GENOMIC DNA]</scope>
    <source>
        <strain>Berkeley</strain>
    </source>
</reference>
<reference key="2">
    <citation type="journal article" date="2002" name="Genome Biol.">
        <title>Annotation of the Drosophila melanogaster euchromatic genome: a systematic review.</title>
        <authorList>
            <person name="Misra S."/>
            <person name="Crosby M.A."/>
            <person name="Mungall C.J."/>
            <person name="Matthews B.B."/>
            <person name="Campbell K.S."/>
            <person name="Hradecky P."/>
            <person name="Huang Y."/>
            <person name="Kaminker J.S."/>
            <person name="Millburn G.H."/>
            <person name="Prochnik S.E."/>
            <person name="Smith C.D."/>
            <person name="Tupy J.L."/>
            <person name="Whitfield E.J."/>
            <person name="Bayraktaroglu L."/>
            <person name="Berman B.P."/>
            <person name="Bettencourt B.R."/>
            <person name="Celniker S.E."/>
            <person name="de Grey A.D.N.J."/>
            <person name="Drysdale R.A."/>
            <person name="Harris N.L."/>
            <person name="Richter J."/>
            <person name="Russo S."/>
            <person name="Schroeder A.J."/>
            <person name="Shu S.Q."/>
            <person name="Stapleton M."/>
            <person name="Yamada C."/>
            <person name="Ashburner M."/>
            <person name="Gelbart W.M."/>
            <person name="Rubin G.M."/>
            <person name="Lewis S.E."/>
        </authorList>
    </citation>
    <scope>GENOME REANNOTATION</scope>
    <source>
        <strain>Berkeley</strain>
    </source>
</reference>
<reference key="3">
    <citation type="submission" date="2013-05" db="EMBL/GenBank/DDBJ databases">
        <authorList>
            <person name="Carlson J."/>
            <person name="Booth B."/>
            <person name="Frise E."/>
            <person name="Park S."/>
            <person name="Wan K."/>
            <person name="Yu C."/>
            <person name="Celniker S."/>
        </authorList>
    </citation>
    <scope>NUCLEOTIDE SEQUENCE [LARGE SCALE MRNA]</scope>
    <source>
        <strain>Berkeley</strain>
        <tissue>Embryo</tissue>
    </source>
</reference>
<reference key="4">
    <citation type="journal article" date="2012" name="J. Biol. Chem.">
        <title>Coiled coil domain-containing protein 56 (CCDC56) is a novel mitochondrial protein essential for cytochrome c oxidase function.</title>
        <authorList>
            <person name="Peralta S."/>
            <person name="Clemente P."/>
            <person name="Sanchez-Martinez A."/>
            <person name="Calleja M."/>
            <person name="Hernandez-Sierra R."/>
            <person name="Matsushima Y."/>
            <person name="Adan C."/>
            <person name="Ugalde C."/>
            <person name="Fernandez-Moreno M.A."/>
            <person name="Kaguni L.S."/>
            <person name="Garesse R."/>
        </authorList>
    </citation>
    <scope>SUBCELLULAR LOCATION</scope>
    <scope>DISRUPTION PHENOTYPE</scope>
    <scope>FUNCTION</scope>
</reference>
<sequence>MSASEQGPKIKYGESAPKLDKAQLQFMKLIEEQNLDRVQKLKRIRRNNLLTAGALGVSVLAIYGYSIFSVQQEKFLDDFEEPKKVSS</sequence>
<protein>
    <recommendedName>
        <fullName>Cytochrome c oxidase assembly factor 3, mitochondrial</fullName>
    </recommendedName>
    <alternativeName>
        <fullName>Coiled-coil domain-containing protein 56 homolog</fullName>
    </alternativeName>
</protein>
<proteinExistence type="inferred from homology"/>
<name>COA3_DROME</name>
<feature type="chain" id="PRO_0000419649" description="Cytochrome c oxidase assembly factor 3, mitochondrial">
    <location>
        <begin position="1"/>
        <end position="87"/>
    </location>
</feature>
<feature type="transmembrane region" description="Helical" evidence="1">
    <location>
        <begin position="47"/>
        <end position="69"/>
    </location>
</feature>
<gene>
    <name type="primary">Ccdc56</name>
    <name type="ORF">CG42630</name>
</gene>
<keyword id="KW-0472">Membrane</keyword>
<keyword id="KW-0496">Mitochondrion</keyword>
<keyword id="KW-1185">Reference proteome</keyword>
<keyword id="KW-0809">Transit peptide</keyword>
<keyword id="KW-0812">Transmembrane</keyword>
<keyword id="KW-1133">Transmembrane helix</keyword>
<organism>
    <name type="scientific">Drosophila melanogaster</name>
    <name type="common">Fruit fly</name>
    <dbReference type="NCBI Taxonomy" id="7227"/>
    <lineage>
        <taxon>Eukaryota</taxon>
        <taxon>Metazoa</taxon>
        <taxon>Ecdysozoa</taxon>
        <taxon>Arthropoda</taxon>
        <taxon>Hexapoda</taxon>
        <taxon>Insecta</taxon>
        <taxon>Pterygota</taxon>
        <taxon>Neoptera</taxon>
        <taxon>Endopterygota</taxon>
        <taxon>Diptera</taxon>
        <taxon>Brachycera</taxon>
        <taxon>Muscomorpha</taxon>
        <taxon>Ephydroidea</taxon>
        <taxon>Drosophilidae</taxon>
        <taxon>Drosophila</taxon>
        <taxon>Sophophora</taxon>
    </lineage>
</organism>
<dbReference type="EMBL" id="AE014296">
    <property type="status" value="NOT_ANNOTATED_CDS"/>
    <property type="molecule type" value="Genomic_DNA"/>
</dbReference>
<dbReference type="EMBL" id="AY069635">
    <property type="protein sequence ID" value="AGK63852.1"/>
    <property type="molecule type" value="mRNA"/>
</dbReference>
<dbReference type="RefSeq" id="NP_996062.3">
    <property type="nucleotide sequence ID" value="NM_206340.4"/>
</dbReference>
<dbReference type="SMR" id="P0DKM0"/>
<dbReference type="BioGRID" id="64681">
    <property type="interactions" value="3"/>
</dbReference>
<dbReference type="FunCoup" id="P0DKM0">
    <property type="interactions" value="331"/>
</dbReference>
<dbReference type="STRING" id="7227.FBpp0291477"/>
<dbReference type="PaxDb" id="7227-FBpp0291477"/>
<dbReference type="EnsemblMetazoa" id="FBtr0302271">
    <property type="protein sequence ID" value="FBpp0291477"/>
    <property type="gene ID" value="FBgn0261353"/>
</dbReference>
<dbReference type="GeneID" id="39320"/>
<dbReference type="KEGG" id="dme:Dmel_CG42630"/>
<dbReference type="AGR" id="FB:FBgn0261353"/>
<dbReference type="CTD" id="39320"/>
<dbReference type="FlyBase" id="FBgn0261353">
    <property type="gene designation" value="Ccdc56"/>
</dbReference>
<dbReference type="VEuPathDB" id="VectorBase:FBgn0261353"/>
<dbReference type="eggNOG" id="KOG4782">
    <property type="taxonomic scope" value="Eukaryota"/>
</dbReference>
<dbReference type="HOGENOM" id="CLU_167761_1_0_1"/>
<dbReference type="InParanoid" id="P0DKM0"/>
<dbReference type="OMA" id="MHFIRQV"/>
<dbReference type="OrthoDB" id="10018333at2759"/>
<dbReference type="PhylomeDB" id="P0DKM0"/>
<dbReference type="Reactome" id="R-DME-9864848">
    <property type="pathway name" value="Complex IV assembly"/>
</dbReference>
<dbReference type="BioGRID-ORCS" id="39320">
    <property type="hits" value="1 hit in 1 CRISPR screen"/>
</dbReference>
<dbReference type="GenomeRNAi" id="39320"/>
<dbReference type="PRO" id="PR:P0DKM0"/>
<dbReference type="Proteomes" id="UP000000803">
    <property type="component" value="Chromosome 3L"/>
</dbReference>
<dbReference type="Bgee" id="FBgn0261353">
    <property type="expression patterns" value="Expressed in seminal fluid secreting gland and 14 other cell types or tissues"/>
</dbReference>
<dbReference type="GO" id="GO:0005743">
    <property type="term" value="C:mitochondrial inner membrane"/>
    <property type="evidence" value="ECO:0000250"/>
    <property type="project" value="FlyBase"/>
</dbReference>
<dbReference type="GO" id="GO:0005739">
    <property type="term" value="C:mitochondrion"/>
    <property type="evidence" value="ECO:0000314"/>
    <property type="project" value="FlyBase"/>
</dbReference>
<dbReference type="GO" id="GO:0033617">
    <property type="term" value="P:mitochondrial cytochrome c oxidase assembly"/>
    <property type="evidence" value="ECO:0000250"/>
    <property type="project" value="FlyBase"/>
</dbReference>
<dbReference type="GO" id="GO:0070131">
    <property type="term" value="P:positive regulation of mitochondrial translation"/>
    <property type="evidence" value="ECO:0000250"/>
    <property type="project" value="FlyBase"/>
</dbReference>
<dbReference type="GO" id="GO:0008535">
    <property type="term" value="P:respiratory chain complex IV assembly"/>
    <property type="evidence" value="ECO:0000315"/>
    <property type="project" value="FlyBase"/>
</dbReference>
<dbReference type="InterPro" id="IPR041752">
    <property type="entry name" value="Coa3"/>
</dbReference>
<dbReference type="InterPro" id="IPR018628">
    <property type="entry name" value="Coa3_cc"/>
</dbReference>
<dbReference type="PANTHER" id="PTHR15642:SF3">
    <property type="entry name" value="CYTOCHROME C OXIDASE ASSEMBLY FACTOR 3 HOMOLOG, MITOCHONDRIAL"/>
    <property type="match status" value="1"/>
</dbReference>
<dbReference type="PANTHER" id="PTHR15642">
    <property type="entry name" value="CYTOCHROME C OXIDASE ASSEMBLY FACTOR 3, MITOCHONDRIAL"/>
    <property type="match status" value="1"/>
</dbReference>
<dbReference type="Pfam" id="PF09813">
    <property type="entry name" value="Coa3_cc"/>
    <property type="match status" value="1"/>
</dbReference>
<evidence type="ECO:0000255" key="1"/>
<evidence type="ECO:0000269" key="2">
    <source>
    </source>
</evidence>
<evidence type="ECO:0000305" key="3"/>
<evidence type="ECO:0000305" key="4">
    <source>
    </source>
</evidence>